<protein>
    <recommendedName>
        <fullName>Spindle pole body component SPC42</fullName>
    </recommendedName>
</protein>
<evidence type="ECO:0000250" key="1"/>
<evidence type="ECO:0000250" key="2">
    <source>
        <dbReference type="UniProtKB" id="P36094"/>
    </source>
</evidence>
<evidence type="ECO:0000255" key="3"/>
<evidence type="ECO:0000256" key="4">
    <source>
        <dbReference type="SAM" id="MobiDB-lite"/>
    </source>
</evidence>
<evidence type="ECO:0000305" key="5"/>
<keyword id="KW-0175">Coiled coil</keyword>
<keyword id="KW-0963">Cytoplasm</keyword>
<keyword id="KW-0206">Cytoskeleton</keyword>
<keyword id="KW-0539">Nucleus</keyword>
<keyword id="KW-0597">Phosphoprotein</keyword>
<sequence>MNGSPTPKRYSSKSSRLYDDYYNIPYQYSNPTPMNRDYNDVGSRINADKLVPEEYKRNTEFINKAVQQNKELNFKLREKQNEIFELKKIAETLRSKLEKYVDITKKLEDQNLNLQIKISDLEKKLSDANSTFKEMRFPKVKDPMVDDDPVSENYDQINVPKHRAPDATGNPRTTNKVSNTSDQDSRLKAIERTLSVLTNYVMRSEDGNNDRMSPLPSPLNTISPINNRLNFQEPKRYNPTVKVNPSDDDIMMYESAELKRVEEEIEELKRKILVRKKHDLRKLSLNNQLQELQSMMDGDDNIKLDNVSKHNHATHRHSSQSSRDYSPSSDACLECSNDLYEKNRVKPENNMSETFATPTPNNR</sequence>
<feature type="chain" id="PRO_0000409214" description="Spindle pole body component SPC42">
    <location>
        <begin position="1"/>
        <end position="363"/>
    </location>
</feature>
<feature type="region of interest" description="Disordered" evidence="4">
    <location>
        <begin position="160"/>
        <end position="184"/>
    </location>
</feature>
<feature type="region of interest" description="Disordered" evidence="4">
    <location>
        <begin position="310"/>
        <end position="363"/>
    </location>
</feature>
<feature type="coiled-coil region" evidence="3">
    <location>
        <begin position="62"/>
        <end position="136"/>
    </location>
</feature>
<feature type="coiled-coil region" evidence="3">
    <location>
        <begin position="248"/>
        <end position="297"/>
    </location>
</feature>
<feature type="compositionally biased region" description="Polar residues" evidence="4">
    <location>
        <begin position="170"/>
        <end position="182"/>
    </location>
</feature>
<feature type="compositionally biased region" description="Low complexity" evidence="4">
    <location>
        <begin position="319"/>
        <end position="329"/>
    </location>
</feature>
<feature type="compositionally biased region" description="Polar residues" evidence="4">
    <location>
        <begin position="349"/>
        <end position="363"/>
    </location>
</feature>
<feature type="modified residue" description="Phosphoserine" evidence="2">
    <location>
        <position position="213"/>
    </location>
</feature>
<feature type="modified residue" description="Phosphoserine" evidence="2">
    <location>
        <position position="217"/>
    </location>
</feature>
<feature type="modified residue" description="Phosphoserine" evidence="2">
    <location>
        <position position="284"/>
    </location>
</feature>
<feature type="modified residue" description="Phosphoserine" evidence="2">
    <location>
        <position position="329"/>
    </location>
</feature>
<reference key="1">
    <citation type="journal article" date="2007" name="Proc. Natl. Acad. Sci. U.S.A.">
        <title>Genome sequencing and comparative analysis of Saccharomyces cerevisiae strain YJM789.</title>
        <authorList>
            <person name="Wei W."/>
            <person name="McCusker J.H."/>
            <person name="Hyman R.W."/>
            <person name="Jones T."/>
            <person name="Ning Y."/>
            <person name="Cao Z."/>
            <person name="Gu Z."/>
            <person name="Bruno D."/>
            <person name="Miranda M."/>
            <person name="Nguyen M."/>
            <person name="Wilhelmy J."/>
            <person name="Komp C."/>
            <person name="Tamse R."/>
            <person name="Wang X."/>
            <person name="Jia P."/>
            <person name="Luedi P."/>
            <person name="Oefner P.J."/>
            <person name="David L."/>
            <person name="Dietrich F.S."/>
            <person name="Li Y."/>
            <person name="Davis R.W."/>
            <person name="Steinmetz L.M."/>
        </authorList>
    </citation>
    <scope>NUCLEOTIDE SEQUENCE [LARGE SCALE GENOMIC DNA]</scope>
    <source>
        <strain>YJM789</strain>
    </source>
</reference>
<comment type="function">
    <text evidence="1">Forms a polymeric layer at the periphery of the spindle pole body (SPB) central plaque which has an essential function during SPB duplication and may facilitate attachment of the SPB to the nuclear membrane.</text>
</comment>
<comment type="subunit">
    <text evidence="1">Component of the SPC110 complex containing at least CMD1, SPC29, SPC42 and SCP110.</text>
</comment>
<comment type="subcellular location">
    <subcellularLocation>
        <location evidence="1">Nucleus</location>
    </subcellularLocation>
    <subcellularLocation>
        <location evidence="1">Cytoplasm</location>
        <location evidence="1">Cytoskeleton</location>
        <location evidence="1">Microtubule organizing center</location>
        <location evidence="1">Spindle pole body</location>
    </subcellularLocation>
</comment>
<comment type="similarity">
    <text evidence="5">Belongs to the SPC42 family.</text>
</comment>
<proteinExistence type="inferred from homology"/>
<gene>
    <name type="primary">SPC42</name>
    <name type="ORF">SCY_3333</name>
</gene>
<organism>
    <name type="scientific">Saccharomyces cerevisiae (strain YJM789)</name>
    <name type="common">Baker's yeast</name>
    <dbReference type="NCBI Taxonomy" id="307796"/>
    <lineage>
        <taxon>Eukaryota</taxon>
        <taxon>Fungi</taxon>
        <taxon>Dikarya</taxon>
        <taxon>Ascomycota</taxon>
        <taxon>Saccharomycotina</taxon>
        <taxon>Saccharomycetes</taxon>
        <taxon>Saccharomycetales</taxon>
        <taxon>Saccharomycetaceae</taxon>
        <taxon>Saccharomyces</taxon>
    </lineage>
</organism>
<name>SPC42_YEAS7</name>
<accession>A6ZZS3</accession>
<dbReference type="EMBL" id="AAFW02000152">
    <property type="protein sequence ID" value="EDN59866.1"/>
    <property type="molecule type" value="Genomic_DNA"/>
</dbReference>
<dbReference type="SMR" id="A6ZZS3"/>
<dbReference type="HOGENOM" id="CLU_056211_1_0_1"/>
<dbReference type="Proteomes" id="UP000007060">
    <property type="component" value="Unassembled WGS sequence"/>
</dbReference>
<dbReference type="GO" id="GO:0005737">
    <property type="term" value="C:cytoplasm"/>
    <property type="evidence" value="ECO:0007669"/>
    <property type="project" value="UniProtKB-KW"/>
</dbReference>
<dbReference type="GO" id="GO:0005634">
    <property type="term" value="C:nucleus"/>
    <property type="evidence" value="ECO:0007669"/>
    <property type="project" value="UniProtKB-SubCell"/>
</dbReference>
<dbReference type="GO" id="GO:0005816">
    <property type="term" value="C:spindle pole body"/>
    <property type="evidence" value="ECO:0007669"/>
    <property type="project" value="UniProtKB-SubCell"/>
</dbReference>
<dbReference type="Gene3D" id="1.20.5.1180">
    <property type="entry name" value="Geminin coiled-coil domain"/>
    <property type="match status" value="1"/>
</dbReference>
<dbReference type="InterPro" id="IPR021611">
    <property type="entry name" value="Spc42"/>
</dbReference>
<dbReference type="Pfam" id="PF11544">
    <property type="entry name" value="Spc42p"/>
    <property type="match status" value="1"/>
</dbReference>